<proteinExistence type="evidence at protein level"/>
<organism>
    <name type="scientific">Caenorhabditis elegans</name>
    <dbReference type="NCBI Taxonomy" id="6239"/>
    <lineage>
        <taxon>Eukaryota</taxon>
        <taxon>Metazoa</taxon>
        <taxon>Ecdysozoa</taxon>
        <taxon>Nematoda</taxon>
        <taxon>Chromadorea</taxon>
        <taxon>Rhabditida</taxon>
        <taxon>Rhabditina</taxon>
        <taxon>Rhabditomorpha</taxon>
        <taxon>Rhabditoidea</taxon>
        <taxon>Rhabditidae</taxon>
        <taxon>Peloderinae</taxon>
        <taxon>Caenorhabditis</taxon>
    </lineage>
</organism>
<dbReference type="EMBL" id="Z80215">
    <property type="protein sequence ID" value="CAB02269.1"/>
    <property type="molecule type" value="Genomic_DNA"/>
</dbReference>
<dbReference type="PIR" id="T19775">
    <property type="entry name" value="T19775"/>
</dbReference>
<dbReference type="RefSeq" id="NP_492360.1">
    <property type="nucleotide sequence ID" value="NM_059959.7"/>
</dbReference>
<dbReference type="SMR" id="Q95005"/>
<dbReference type="BioGRID" id="38112">
    <property type="interactions" value="95"/>
</dbReference>
<dbReference type="FunCoup" id="Q95005">
    <property type="interactions" value="1789"/>
</dbReference>
<dbReference type="IntAct" id="Q95005">
    <property type="interactions" value="18"/>
</dbReference>
<dbReference type="STRING" id="6239.C36B1.4.2"/>
<dbReference type="PaxDb" id="6239-C36B1.4.1"/>
<dbReference type="PeptideAtlas" id="Q95005"/>
<dbReference type="EnsemblMetazoa" id="C36B1.4.1">
    <property type="protein sequence ID" value="C36B1.4.1"/>
    <property type="gene ID" value="WBGene00003925"/>
</dbReference>
<dbReference type="GeneID" id="172679"/>
<dbReference type="KEGG" id="cel:CELE_C36B1.4"/>
<dbReference type="UCSC" id="C36B1.4.1">
    <property type="organism name" value="c. elegans"/>
</dbReference>
<dbReference type="AGR" id="WB:WBGene00003925"/>
<dbReference type="CTD" id="172679"/>
<dbReference type="WormBase" id="C36B1.4">
    <property type="protein sequence ID" value="CE05371"/>
    <property type="gene ID" value="WBGene00003925"/>
    <property type="gene designation" value="pas-4"/>
</dbReference>
<dbReference type="eggNOG" id="KOG0183">
    <property type="taxonomic scope" value="Eukaryota"/>
</dbReference>
<dbReference type="GeneTree" id="ENSGT00940000167759"/>
<dbReference type="HOGENOM" id="CLU_035750_4_0_1"/>
<dbReference type="InParanoid" id="Q95005"/>
<dbReference type="OMA" id="ICMLDHH"/>
<dbReference type="OrthoDB" id="3145928at2759"/>
<dbReference type="PhylomeDB" id="Q95005"/>
<dbReference type="Reactome" id="R-CEL-1234176">
    <property type="pathway name" value="Oxygen-dependent proline hydroxylation of Hypoxia-inducible Factor Alpha"/>
</dbReference>
<dbReference type="Reactome" id="R-CEL-1236978">
    <property type="pathway name" value="Cross-presentation of soluble exogenous antigens (endosomes)"/>
</dbReference>
<dbReference type="Reactome" id="R-CEL-187577">
    <property type="pathway name" value="SCF(Skp2)-mediated degradation of p27/p21"/>
</dbReference>
<dbReference type="Reactome" id="R-CEL-195253">
    <property type="pathway name" value="Degradation of beta-catenin by the destruction complex"/>
</dbReference>
<dbReference type="Reactome" id="R-CEL-349425">
    <property type="pathway name" value="Autodegradation of the E3 ubiquitin ligase COP1"/>
</dbReference>
<dbReference type="Reactome" id="R-CEL-350562">
    <property type="pathway name" value="Regulation of ornithine decarboxylase (ODC)"/>
</dbReference>
<dbReference type="Reactome" id="R-CEL-382556">
    <property type="pathway name" value="ABC-family proteins mediated transport"/>
</dbReference>
<dbReference type="Reactome" id="R-CEL-4608870">
    <property type="pathway name" value="Asymmetric localization of PCP proteins"/>
</dbReference>
<dbReference type="Reactome" id="R-CEL-4641258">
    <property type="pathway name" value="Degradation of DVL"/>
</dbReference>
<dbReference type="Reactome" id="R-CEL-5632684">
    <property type="pathway name" value="Hedgehog 'on' state"/>
</dbReference>
<dbReference type="Reactome" id="R-CEL-5687128">
    <property type="pathway name" value="MAPK6/MAPK4 signaling"/>
</dbReference>
<dbReference type="Reactome" id="R-CEL-5689603">
    <property type="pathway name" value="UCH proteinases"/>
</dbReference>
<dbReference type="Reactome" id="R-CEL-5689880">
    <property type="pathway name" value="Ub-specific processing proteases"/>
</dbReference>
<dbReference type="Reactome" id="R-CEL-68949">
    <property type="pathway name" value="Orc1 removal from chromatin"/>
</dbReference>
<dbReference type="Reactome" id="R-CEL-69017">
    <property type="pathway name" value="CDK-mediated phosphorylation and removal of Cdc6"/>
</dbReference>
<dbReference type="Reactome" id="R-CEL-69601">
    <property type="pathway name" value="Ubiquitin Mediated Degradation of Phosphorylated Cdc25A"/>
</dbReference>
<dbReference type="Reactome" id="R-CEL-75815">
    <property type="pathway name" value="Ubiquitin-dependent degradation of Cyclin D"/>
</dbReference>
<dbReference type="Reactome" id="R-CEL-8854050">
    <property type="pathway name" value="FBXL7 down-regulates AURKA during mitotic entry and in early mitosis"/>
</dbReference>
<dbReference type="Reactome" id="R-CEL-8939902">
    <property type="pathway name" value="Regulation of RUNX2 expression and activity"/>
</dbReference>
<dbReference type="Reactome" id="R-CEL-8941858">
    <property type="pathway name" value="Regulation of RUNX3 expression and activity"/>
</dbReference>
<dbReference type="Reactome" id="R-CEL-8948751">
    <property type="pathway name" value="Regulation of PTEN stability and activity"/>
</dbReference>
<dbReference type="Reactome" id="R-CEL-8951664">
    <property type="pathway name" value="Neddylation"/>
</dbReference>
<dbReference type="Reactome" id="R-CEL-9755511">
    <property type="pathway name" value="KEAP1-NFE2L2 pathway"/>
</dbReference>
<dbReference type="Reactome" id="R-CEL-9762114">
    <property type="pathway name" value="GSK3B and BTRC:CUL1-mediated-degradation of NFE2L2"/>
</dbReference>
<dbReference type="Reactome" id="R-CEL-983168">
    <property type="pathway name" value="Antigen processing: Ubiquitination &amp; Proteasome degradation"/>
</dbReference>
<dbReference type="Reactome" id="R-CEL-9907900">
    <property type="pathway name" value="Proteasome assembly"/>
</dbReference>
<dbReference type="SignaLink" id="Q95005"/>
<dbReference type="PRO" id="PR:Q95005"/>
<dbReference type="Proteomes" id="UP000001940">
    <property type="component" value="Chromosome I"/>
</dbReference>
<dbReference type="Bgee" id="WBGene00003925">
    <property type="expression patterns" value="Expressed in germ line (C elegans) and 4 other cell types or tissues"/>
</dbReference>
<dbReference type="GO" id="GO:0005737">
    <property type="term" value="C:cytoplasm"/>
    <property type="evidence" value="ECO:0007669"/>
    <property type="project" value="UniProtKB-SubCell"/>
</dbReference>
<dbReference type="GO" id="GO:0005634">
    <property type="term" value="C:nucleus"/>
    <property type="evidence" value="ECO:0000318"/>
    <property type="project" value="GO_Central"/>
</dbReference>
<dbReference type="GO" id="GO:0019773">
    <property type="term" value="C:proteasome core complex, alpha-subunit complex"/>
    <property type="evidence" value="ECO:0000250"/>
    <property type="project" value="UniProtKB"/>
</dbReference>
<dbReference type="GO" id="GO:0043161">
    <property type="term" value="P:proteasome-mediated ubiquitin-dependent protein catabolic process"/>
    <property type="evidence" value="ECO:0000318"/>
    <property type="project" value="GO_Central"/>
</dbReference>
<dbReference type="CDD" id="cd03755">
    <property type="entry name" value="proteasome_alpha_type_7"/>
    <property type="match status" value="1"/>
</dbReference>
<dbReference type="FunFam" id="3.60.20.10:FF:000004">
    <property type="entry name" value="Proteasome subunit alpha type-4"/>
    <property type="match status" value="1"/>
</dbReference>
<dbReference type="Gene3D" id="3.60.20.10">
    <property type="entry name" value="Glutamine Phosphoribosylpyrophosphate, subunit 1, domain 1"/>
    <property type="match status" value="1"/>
</dbReference>
<dbReference type="InterPro" id="IPR029055">
    <property type="entry name" value="Ntn_hydrolases_N"/>
</dbReference>
<dbReference type="InterPro" id="IPR050115">
    <property type="entry name" value="Proteasome_alpha"/>
</dbReference>
<dbReference type="InterPro" id="IPR023332">
    <property type="entry name" value="Proteasome_alpha-type"/>
</dbReference>
<dbReference type="InterPro" id="IPR000426">
    <property type="entry name" value="Proteasome_asu_N"/>
</dbReference>
<dbReference type="InterPro" id="IPR001353">
    <property type="entry name" value="Proteasome_sua/b"/>
</dbReference>
<dbReference type="NCBIfam" id="NF003075">
    <property type="entry name" value="PRK03996.1"/>
    <property type="match status" value="1"/>
</dbReference>
<dbReference type="PANTHER" id="PTHR11599">
    <property type="entry name" value="PROTEASOME SUBUNIT ALPHA/BETA"/>
    <property type="match status" value="1"/>
</dbReference>
<dbReference type="Pfam" id="PF00227">
    <property type="entry name" value="Proteasome"/>
    <property type="match status" value="1"/>
</dbReference>
<dbReference type="Pfam" id="PF10584">
    <property type="entry name" value="Proteasome_A_N"/>
    <property type="match status" value="1"/>
</dbReference>
<dbReference type="SMART" id="SM00948">
    <property type="entry name" value="Proteasome_A_N"/>
    <property type="match status" value="1"/>
</dbReference>
<dbReference type="SUPFAM" id="SSF56235">
    <property type="entry name" value="N-terminal nucleophile aminohydrolases (Ntn hydrolases)"/>
    <property type="match status" value="1"/>
</dbReference>
<dbReference type="PROSITE" id="PS00388">
    <property type="entry name" value="PROTEASOME_ALPHA_1"/>
    <property type="match status" value="1"/>
</dbReference>
<dbReference type="PROSITE" id="PS51475">
    <property type="entry name" value="PROTEASOME_ALPHA_2"/>
    <property type="match status" value="1"/>
</dbReference>
<reference key="1">
    <citation type="journal article" date="1998" name="Science">
        <title>Genome sequence of the nematode C. elegans: a platform for investigating biology.</title>
        <authorList>
            <consortium name="The C. elegans sequencing consortium"/>
        </authorList>
    </citation>
    <scope>NUCLEOTIDE SEQUENCE [LARGE SCALE GENOMIC DNA]</scope>
    <source>
        <strain>Bristol N2</strain>
    </source>
</reference>
<protein>
    <recommendedName>
        <fullName>Proteasome subunit alpha type-7</fullName>
    </recommendedName>
    <alternativeName>
        <fullName>Proteasome subunit alpha 4</fullName>
    </alternativeName>
</protein>
<evidence type="ECO:0000250" key="1"/>
<evidence type="ECO:0000255" key="2">
    <source>
        <dbReference type="PROSITE-ProRule" id="PRU00808"/>
    </source>
</evidence>
<name>PSA7_CAEEL</name>
<keyword id="KW-0963">Cytoplasm</keyword>
<keyword id="KW-0539">Nucleus</keyword>
<keyword id="KW-0647">Proteasome</keyword>
<keyword id="KW-1185">Reference proteome</keyword>
<gene>
    <name type="primary">pas-4</name>
    <name type="ORF">C36B1.4</name>
</gene>
<sequence length="253" mass="28239">MNRYDRAITIFSPDGHLFQVEYAQEAVKKGSTAVGVRGKDCIVIGVEKKSIPALQDDRTIRKIHMIDDHVMLAFAGLSADARVLVDRARIECQSYKLTLEDPVTVAYISRYIANTKQRFTQSPGRRPFGISMLIGGFDHDGTPRLFKTEPSGAYYEYVANATGRGEKPVREYLEEQYSEENTVDEATTLKLVVKSLAQVVPPGSQNIEIAVMKKVNDELQQRVLSTEEIEALLKVVETERVAAEAEEAASKKK</sequence>
<accession>Q95005</accession>
<feature type="chain" id="PRO_0000124151" description="Proteasome subunit alpha type-7">
    <location>
        <begin position="1"/>
        <end position="253"/>
    </location>
</feature>
<comment type="function">
    <text>The proteasome is a multicatalytic proteinase complex which is characterized by its ability to cleave peptides with Arg, Phe, Tyr, Leu, and Glu adjacent to the leaving group at neutral or slightly basic pH. The proteasome has an ATP-dependent proteolytic activity.</text>
</comment>
<comment type="subunit">
    <text evidence="1">The 26S proteasome consists of a 20S proteasome core and two 19S regulatory subunits. The 20S proteasome core is composed of 28 subunits that are arranged in four stacked rings, resulting in a barrel-shaped structure. The two end rings are each formed by seven alpha subunits, and the two central rings are each formed by seven beta subunits. The catalytic chamber with the active sites is on the inside of the barrel (By similarity).</text>
</comment>
<comment type="interaction">
    <interactant intactId="EBI-316796">
        <id>Q95005</id>
    </interactant>
    <interactant intactId="EBI-320441">
        <id>Q95008</id>
        <label>pas-5</label>
    </interactant>
    <organismsDiffer>false</organismsDiffer>
    <experiments>3</experiments>
</comment>
<comment type="subcellular location">
    <subcellularLocation>
        <location evidence="1">Cytoplasm</location>
    </subcellularLocation>
    <subcellularLocation>
        <location evidence="1">Nucleus</location>
    </subcellularLocation>
</comment>
<comment type="similarity">
    <text evidence="2">Belongs to the peptidase T1A family.</text>
</comment>